<sequence>MSTRNDVHLGHKAKKRFGQNFLNDPYVIDGIVSAINPLPGQNLVEIGPGLGAITEPVGREIDKFTVIELDRDLAARLRTHPELGSKLTIYEGDAMRFDFTQLIQEGNKLRIFGNLPYNISTPLMFHLFEFHKDIQDMHFMLQKEVVNRLAAGPGTKAYGRLTVMAQYYCKVMPVLEVPPTAFVPPPKVDSAVVRLVPYEVLPFPAKNLKWLDRVCREGFNQRRKTVRNCFKALLTKEQLEALGVNPSHRPENLTLEQFVIMANWLNDNYQAESTESA</sequence>
<organism>
    <name type="scientific">Aliivibrio salmonicida (strain LFI1238)</name>
    <name type="common">Vibrio salmonicida (strain LFI1238)</name>
    <dbReference type="NCBI Taxonomy" id="316275"/>
    <lineage>
        <taxon>Bacteria</taxon>
        <taxon>Pseudomonadati</taxon>
        <taxon>Pseudomonadota</taxon>
        <taxon>Gammaproteobacteria</taxon>
        <taxon>Vibrionales</taxon>
        <taxon>Vibrionaceae</taxon>
        <taxon>Aliivibrio</taxon>
    </lineage>
</organism>
<comment type="function">
    <text evidence="1">Specifically dimethylates two adjacent adenosines (A1518 and A1519) in the loop of a conserved hairpin near the 3'-end of 16S rRNA in the 30S particle. May play a critical role in biogenesis of 30S subunits.</text>
</comment>
<comment type="catalytic activity">
    <reaction evidence="1">
        <text>adenosine(1518)/adenosine(1519) in 16S rRNA + 4 S-adenosyl-L-methionine = N(6)-dimethyladenosine(1518)/N(6)-dimethyladenosine(1519) in 16S rRNA + 4 S-adenosyl-L-homocysteine + 4 H(+)</text>
        <dbReference type="Rhea" id="RHEA:19609"/>
        <dbReference type="Rhea" id="RHEA-COMP:10232"/>
        <dbReference type="Rhea" id="RHEA-COMP:10233"/>
        <dbReference type="ChEBI" id="CHEBI:15378"/>
        <dbReference type="ChEBI" id="CHEBI:57856"/>
        <dbReference type="ChEBI" id="CHEBI:59789"/>
        <dbReference type="ChEBI" id="CHEBI:74411"/>
        <dbReference type="ChEBI" id="CHEBI:74493"/>
        <dbReference type="EC" id="2.1.1.182"/>
    </reaction>
</comment>
<comment type="subcellular location">
    <subcellularLocation>
        <location evidence="1">Cytoplasm</location>
    </subcellularLocation>
</comment>
<comment type="similarity">
    <text evidence="1">Belongs to the class I-like SAM-binding methyltransferase superfamily. rRNA adenine N(6)-methyltransferase family. RsmA subfamily.</text>
</comment>
<reference key="1">
    <citation type="journal article" date="2008" name="BMC Genomics">
        <title>The genome sequence of the fish pathogen Aliivibrio salmonicida strain LFI1238 shows extensive evidence of gene decay.</title>
        <authorList>
            <person name="Hjerde E."/>
            <person name="Lorentzen M.S."/>
            <person name="Holden M.T."/>
            <person name="Seeger K."/>
            <person name="Paulsen S."/>
            <person name="Bason N."/>
            <person name="Churcher C."/>
            <person name="Harris D."/>
            <person name="Norbertczak H."/>
            <person name="Quail M.A."/>
            <person name="Sanders S."/>
            <person name="Thurston S."/>
            <person name="Parkhill J."/>
            <person name="Willassen N.P."/>
            <person name="Thomson N.R."/>
        </authorList>
    </citation>
    <scope>NUCLEOTIDE SEQUENCE [LARGE SCALE GENOMIC DNA]</scope>
    <source>
        <strain>LFI1238</strain>
    </source>
</reference>
<evidence type="ECO:0000255" key="1">
    <source>
        <dbReference type="HAMAP-Rule" id="MF_00607"/>
    </source>
</evidence>
<name>RSMA_ALISL</name>
<dbReference type="EC" id="2.1.1.182" evidence="1"/>
<dbReference type="EMBL" id="FM178379">
    <property type="protein sequence ID" value="CAQ78053.1"/>
    <property type="molecule type" value="Genomic_DNA"/>
</dbReference>
<dbReference type="RefSeq" id="WP_012549195.1">
    <property type="nucleotide sequence ID" value="NC_011312.1"/>
</dbReference>
<dbReference type="SMR" id="B6EL48"/>
<dbReference type="KEGG" id="vsa:VSAL_I0368"/>
<dbReference type="eggNOG" id="COG0030">
    <property type="taxonomic scope" value="Bacteria"/>
</dbReference>
<dbReference type="HOGENOM" id="CLU_041220_0_1_6"/>
<dbReference type="Proteomes" id="UP000001730">
    <property type="component" value="Chromosome 1"/>
</dbReference>
<dbReference type="GO" id="GO:0005829">
    <property type="term" value="C:cytosol"/>
    <property type="evidence" value="ECO:0007669"/>
    <property type="project" value="TreeGrafter"/>
</dbReference>
<dbReference type="GO" id="GO:0052908">
    <property type="term" value="F:16S rRNA (adenine(1518)-N(6)/adenine(1519)-N(6))-dimethyltransferase activity"/>
    <property type="evidence" value="ECO:0007669"/>
    <property type="project" value="UniProtKB-EC"/>
</dbReference>
<dbReference type="GO" id="GO:0003723">
    <property type="term" value="F:RNA binding"/>
    <property type="evidence" value="ECO:0007669"/>
    <property type="project" value="UniProtKB-KW"/>
</dbReference>
<dbReference type="FunFam" id="1.10.8.100:FF:000001">
    <property type="entry name" value="Ribosomal RNA small subunit methyltransferase A"/>
    <property type="match status" value="1"/>
</dbReference>
<dbReference type="FunFam" id="3.40.50.150:FF:000006">
    <property type="entry name" value="Ribosomal RNA small subunit methyltransferase A"/>
    <property type="match status" value="1"/>
</dbReference>
<dbReference type="Gene3D" id="1.10.8.100">
    <property type="entry name" value="Ribosomal RNA adenine dimethylase-like, domain 2"/>
    <property type="match status" value="1"/>
</dbReference>
<dbReference type="Gene3D" id="3.40.50.150">
    <property type="entry name" value="Vaccinia Virus protein VP39"/>
    <property type="match status" value="1"/>
</dbReference>
<dbReference type="HAMAP" id="MF_00607">
    <property type="entry name" value="16SrRNA_methyltr_A"/>
    <property type="match status" value="1"/>
</dbReference>
<dbReference type="InterPro" id="IPR001737">
    <property type="entry name" value="KsgA/Erm"/>
</dbReference>
<dbReference type="InterPro" id="IPR023165">
    <property type="entry name" value="rRNA_Ade_diMease-like_C"/>
</dbReference>
<dbReference type="InterPro" id="IPR020596">
    <property type="entry name" value="rRNA_Ade_Mease_Trfase_CS"/>
</dbReference>
<dbReference type="InterPro" id="IPR020598">
    <property type="entry name" value="rRNA_Ade_methylase_Trfase_N"/>
</dbReference>
<dbReference type="InterPro" id="IPR011530">
    <property type="entry name" value="rRNA_adenine_dimethylase"/>
</dbReference>
<dbReference type="InterPro" id="IPR029063">
    <property type="entry name" value="SAM-dependent_MTases_sf"/>
</dbReference>
<dbReference type="NCBIfam" id="TIGR00755">
    <property type="entry name" value="ksgA"/>
    <property type="match status" value="1"/>
</dbReference>
<dbReference type="PANTHER" id="PTHR11727">
    <property type="entry name" value="DIMETHYLADENOSINE TRANSFERASE"/>
    <property type="match status" value="1"/>
</dbReference>
<dbReference type="PANTHER" id="PTHR11727:SF7">
    <property type="entry name" value="DIMETHYLADENOSINE TRANSFERASE-RELATED"/>
    <property type="match status" value="1"/>
</dbReference>
<dbReference type="Pfam" id="PF00398">
    <property type="entry name" value="RrnaAD"/>
    <property type="match status" value="1"/>
</dbReference>
<dbReference type="SMART" id="SM00650">
    <property type="entry name" value="rADc"/>
    <property type="match status" value="1"/>
</dbReference>
<dbReference type="SUPFAM" id="SSF53335">
    <property type="entry name" value="S-adenosyl-L-methionine-dependent methyltransferases"/>
    <property type="match status" value="1"/>
</dbReference>
<dbReference type="PROSITE" id="PS01131">
    <property type="entry name" value="RRNA_A_DIMETH"/>
    <property type="match status" value="1"/>
</dbReference>
<dbReference type="PROSITE" id="PS51689">
    <property type="entry name" value="SAM_RNA_A_N6_MT"/>
    <property type="match status" value="1"/>
</dbReference>
<feature type="chain" id="PRO_1000130238" description="Ribosomal RNA small subunit methyltransferase A">
    <location>
        <begin position="1"/>
        <end position="277"/>
    </location>
</feature>
<feature type="binding site" evidence="1">
    <location>
        <position position="20"/>
    </location>
    <ligand>
        <name>S-adenosyl-L-methionine</name>
        <dbReference type="ChEBI" id="CHEBI:59789"/>
    </ligand>
</feature>
<feature type="binding site" evidence="1">
    <location>
        <position position="22"/>
    </location>
    <ligand>
        <name>S-adenosyl-L-methionine</name>
        <dbReference type="ChEBI" id="CHEBI:59789"/>
    </ligand>
</feature>
<feature type="binding site" evidence="1">
    <location>
        <position position="47"/>
    </location>
    <ligand>
        <name>S-adenosyl-L-methionine</name>
        <dbReference type="ChEBI" id="CHEBI:59789"/>
    </ligand>
</feature>
<feature type="binding site" evidence="1">
    <location>
        <position position="68"/>
    </location>
    <ligand>
        <name>S-adenosyl-L-methionine</name>
        <dbReference type="ChEBI" id="CHEBI:59789"/>
    </ligand>
</feature>
<feature type="binding site" evidence="1">
    <location>
        <position position="93"/>
    </location>
    <ligand>
        <name>S-adenosyl-L-methionine</name>
        <dbReference type="ChEBI" id="CHEBI:59789"/>
    </ligand>
</feature>
<feature type="binding site" evidence="1">
    <location>
        <position position="114"/>
    </location>
    <ligand>
        <name>S-adenosyl-L-methionine</name>
        <dbReference type="ChEBI" id="CHEBI:59789"/>
    </ligand>
</feature>
<keyword id="KW-0963">Cytoplasm</keyword>
<keyword id="KW-0489">Methyltransferase</keyword>
<keyword id="KW-0694">RNA-binding</keyword>
<keyword id="KW-0698">rRNA processing</keyword>
<keyword id="KW-0949">S-adenosyl-L-methionine</keyword>
<keyword id="KW-0808">Transferase</keyword>
<protein>
    <recommendedName>
        <fullName evidence="1">Ribosomal RNA small subunit methyltransferase A</fullName>
        <ecNumber evidence="1">2.1.1.182</ecNumber>
    </recommendedName>
    <alternativeName>
        <fullName evidence="1">16S rRNA (adenine(1518)-N(6)/adenine(1519)-N(6))-dimethyltransferase</fullName>
    </alternativeName>
    <alternativeName>
        <fullName evidence="1">16S rRNA dimethyladenosine transferase</fullName>
    </alternativeName>
    <alternativeName>
        <fullName evidence="1">16S rRNA dimethylase</fullName>
    </alternativeName>
    <alternativeName>
        <fullName evidence="1">S-adenosylmethionine-6-N', N'-adenosyl(rRNA) dimethyltransferase</fullName>
    </alternativeName>
</protein>
<accession>B6EL48</accession>
<proteinExistence type="inferred from homology"/>
<gene>
    <name evidence="1" type="primary">rsmA</name>
    <name evidence="1" type="synonym">ksgA</name>
    <name type="ordered locus">VSAL_I0368</name>
</gene>